<sequence length="65" mass="7099">MNVKILVLVAVLCLVVSTHAERHSKTDMEDSPMIQERKCLPPGKPCYGATQKIPCCGVCSHNNCT</sequence>
<reference key="1">
    <citation type="journal article" date="2010" name="J. Proteome Res.">
        <title>Molecular diversification of peptide toxins from the tarantula Haplopelma hainanum (Ornithoctonus hainana) venom based on transcriptomic, peptidomic, and genomic analyses.</title>
        <authorList>
            <person name="Tang X."/>
            <person name="Zhang Y."/>
            <person name="Hu W."/>
            <person name="Xu D."/>
            <person name="Tao H."/>
            <person name="Yang X."/>
            <person name="Li Y."/>
            <person name="Jiang L."/>
            <person name="Liang S."/>
        </authorList>
    </citation>
    <scope>NUCLEOTIDE SEQUENCE [LARGE SCALE GENOMIC DNA]</scope>
    <source>
        <tissue>Venom gland</tissue>
    </source>
</reference>
<name>H10A2_CYRHA</name>
<proteinExistence type="inferred from homology"/>
<accession>D2Y2R1</accession>
<evidence type="ECO:0000250" key="1"/>
<evidence type="ECO:0000255" key="2"/>
<dbReference type="EMBL" id="GU293138">
    <property type="protein sequence ID" value="ADB56954.1"/>
    <property type="molecule type" value="Genomic_DNA"/>
</dbReference>
<dbReference type="SMR" id="D2Y2R1"/>
<dbReference type="ArachnoServer" id="AS001835">
    <property type="toxin name" value="omega-theraphotoxin-Hhn2a"/>
</dbReference>
<dbReference type="GO" id="GO:0005576">
    <property type="term" value="C:extracellular region"/>
    <property type="evidence" value="ECO:0007669"/>
    <property type="project" value="UniProtKB-SubCell"/>
</dbReference>
<dbReference type="GO" id="GO:0005246">
    <property type="term" value="F:calcium channel regulator activity"/>
    <property type="evidence" value="ECO:0007669"/>
    <property type="project" value="UniProtKB-KW"/>
</dbReference>
<dbReference type="GO" id="GO:0090729">
    <property type="term" value="F:toxin activity"/>
    <property type="evidence" value="ECO:0007669"/>
    <property type="project" value="UniProtKB-KW"/>
</dbReference>
<dbReference type="SUPFAM" id="SSF57059">
    <property type="entry name" value="omega toxin-like"/>
    <property type="match status" value="1"/>
</dbReference>
<organism>
    <name type="scientific">Cyriopagopus hainanus</name>
    <name type="common">Chinese bird spider</name>
    <name type="synonym">Haplopelma hainanum</name>
    <dbReference type="NCBI Taxonomy" id="209901"/>
    <lineage>
        <taxon>Eukaryota</taxon>
        <taxon>Metazoa</taxon>
        <taxon>Ecdysozoa</taxon>
        <taxon>Arthropoda</taxon>
        <taxon>Chelicerata</taxon>
        <taxon>Arachnida</taxon>
        <taxon>Araneae</taxon>
        <taxon>Mygalomorphae</taxon>
        <taxon>Theraphosidae</taxon>
        <taxon>Haplopelma</taxon>
    </lineage>
</organism>
<keyword id="KW-0108">Calcium channel impairing toxin</keyword>
<keyword id="KW-1015">Disulfide bond</keyword>
<keyword id="KW-0872">Ion channel impairing toxin</keyword>
<keyword id="KW-0960">Knottin</keyword>
<keyword id="KW-0528">Neurotoxin</keyword>
<keyword id="KW-0964">Secreted</keyword>
<keyword id="KW-0732">Signal</keyword>
<keyword id="KW-0800">Toxin</keyword>
<keyword id="KW-1218">Voltage-gated calcium channel impairing toxin</keyword>
<comment type="function">
    <text evidence="1">Reversibly blocks N-type calcium channels (Cav2.2/CACNA1B) in rat dorsal root ganglion cells. Elicits no toxic symptoms in either vertebrates or invertebrates during a period of 48 hours post-injection, when it was assayed in vivo by direct injection into mice and cockroaches (By similarity).</text>
</comment>
<comment type="subcellular location">
    <subcellularLocation>
        <location evidence="1">Secreted</location>
    </subcellularLocation>
</comment>
<comment type="tissue specificity">
    <text>Expressed by the venom gland.</text>
</comment>
<comment type="domain">
    <text evidence="1">The presence of a 'disulfide through disulfide knot' structurally defines this protein as a knottin.</text>
</comment>
<comment type="similarity">
    <text>Belongs to the neurotoxin 36 family. 02 subfamily.</text>
</comment>
<protein>
    <recommendedName>
        <fullName>Hainantoxin-X.2</fullName>
        <shortName>HNTX-X.2</shortName>
    </recommendedName>
</protein>
<feature type="signal peptide" evidence="2">
    <location>
        <begin position="1"/>
        <end position="20"/>
    </location>
</feature>
<feature type="propeptide" id="PRO_0000400970" evidence="1">
    <location>
        <begin position="21"/>
        <end position="37"/>
    </location>
</feature>
<feature type="peptide" id="PRO_0000400971" description="Hainantoxin-X.2">
    <location>
        <begin position="38"/>
        <end position="65"/>
    </location>
</feature>
<feature type="disulfide bond" evidence="1">
    <location>
        <begin position="39"/>
        <end position="56"/>
    </location>
</feature>
<feature type="disulfide bond" evidence="1">
    <location>
        <begin position="46"/>
        <end position="59"/>
    </location>
</feature>
<feature type="disulfide bond" evidence="1">
    <location>
        <begin position="55"/>
        <end position="64"/>
    </location>
</feature>